<keyword id="KW-0067">ATP-binding</keyword>
<keyword id="KW-0347">Helicase</keyword>
<keyword id="KW-0378">Hydrolase</keyword>
<keyword id="KW-0547">Nucleotide-binding</keyword>
<keyword id="KW-0539">Nucleus</keyword>
<keyword id="KW-0597">Phosphoprotein</keyword>
<keyword id="KW-1185">Reference proteome</keyword>
<keyword id="KW-0694">RNA-binding</keyword>
<keyword id="KW-0804">Transcription</keyword>
<keyword id="KW-0805">Transcription regulation</keyword>
<protein>
    <recommendedName>
        <fullName>ATP-dependent RNA helicase DDX54</fullName>
        <ecNumber>3.6.4.13</ecNumber>
    </recommendedName>
    <alternativeName>
        <fullName>DEAD box protein 54</fullName>
    </alternativeName>
</protein>
<dbReference type="EC" id="3.6.4.13"/>
<dbReference type="EMBL" id="AF319547">
    <property type="protein sequence ID" value="AAM47540.1"/>
    <property type="molecule type" value="mRNA"/>
</dbReference>
<dbReference type="EMBL" id="BC043699">
    <property type="protein sequence ID" value="AAH43699.1"/>
    <property type="molecule type" value="mRNA"/>
</dbReference>
<dbReference type="CCDS" id="CCDS39241.1"/>
<dbReference type="RefSeq" id="NP_082317.1">
    <property type="nucleotide sequence ID" value="NM_028041.3"/>
</dbReference>
<dbReference type="SMR" id="Q8K4L0"/>
<dbReference type="BioGRID" id="215078">
    <property type="interactions" value="4"/>
</dbReference>
<dbReference type="FunCoup" id="Q8K4L0">
    <property type="interactions" value="4147"/>
</dbReference>
<dbReference type="STRING" id="10090.ENSMUSP00000031598"/>
<dbReference type="iPTMnet" id="Q8K4L0"/>
<dbReference type="PhosphoSitePlus" id="Q8K4L0"/>
<dbReference type="jPOST" id="Q8K4L0"/>
<dbReference type="PaxDb" id="10090-ENSMUSP00000031598"/>
<dbReference type="ProteomicsDB" id="279330"/>
<dbReference type="Pumba" id="Q8K4L0"/>
<dbReference type="Antibodypedia" id="18719">
    <property type="antibodies" value="164 antibodies from 28 providers"/>
</dbReference>
<dbReference type="DNASU" id="71990"/>
<dbReference type="Ensembl" id="ENSMUST00000031598.11">
    <property type="protein sequence ID" value="ENSMUSP00000031598.10"/>
    <property type="gene ID" value="ENSMUSG00000029599.14"/>
</dbReference>
<dbReference type="GeneID" id="71990"/>
<dbReference type="KEGG" id="mmu:71990"/>
<dbReference type="UCSC" id="uc008zhq.1">
    <property type="organism name" value="mouse"/>
</dbReference>
<dbReference type="AGR" id="MGI:1919240"/>
<dbReference type="CTD" id="79039"/>
<dbReference type="MGI" id="MGI:1919240">
    <property type="gene designation" value="Ddx54"/>
</dbReference>
<dbReference type="VEuPathDB" id="HostDB:ENSMUSG00000029599"/>
<dbReference type="eggNOG" id="KOG0337">
    <property type="taxonomic scope" value="Eukaryota"/>
</dbReference>
<dbReference type="GeneTree" id="ENSGT00550000075100"/>
<dbReference type="HOGENOM" id="CLU_003041_5_2_1"/>
<dbReference type="InParanoid" id="Q8K4L0"/>
<dbReference type="OMA" id="EDQFGMM"/>
<dbReference type="OrthoDB" id="10261375at2759"/>
<dbReference type="PhylomeDB" id="Q8K4L0"/>
<dbReference type="TreeFam" id="TF105707"/>
<dbReference type="BioGRID-ORCS" id="71990">
    <property type="hits" value="31 hits in 83 CRISPR screens"/>
</dbReference>
<dbReference type="ChiTaRS" id="Ddx54">
    <property type="organism name" value="mouse"/>
</dbReference>
<dbReference type="PRO" id="PR:Q8K4L0"/>
<dbReference type="Proteomes" id="UP000000589">
    <property type="component" value="Chromosome 5"/>
</dbReference>
<dbReference type="RNAct" id="Q8K4L0">
    <property type="molecule type" value="protein"/>
</dbReference>
<dbReference type="Bgee" id="ENSMUSG00000029599">
    <property type="expression patterns" value="Expressed in paneth cell and 263 other cell types or tissues"/>
</dbReference>
<dbReference type="GO" id="GO:0005794">
    <property type="term" value="C:Golgi apparatus"/>
    <property type="evidence" value="ECO:0007669"/>
    <property type="project" value="Ensembl"/>
</dbReference>
<dbReference type="GO" id="GO:0005730">
    <property type="term" value="C:nucleolus"/>
    <property type="evidence" value="ECO:0000250"/>
    <property type="project" value="UniProtKB"/>
</dbReference>
<dbReference type="GO" id="GO:0005654">
    <property type="term" value="C:nucleoplasm"/>
    <property type="evidence" value="ECO:0007669"/>
    <property type="project" value="Ensembl"/>
</dbReference>
<dbReference type="GO" id="GO:0005634">
    <property type="term" value="C:nucleus"/>
    <property type="evidence" value="ECO:0000250"/>
    <property type="project" value="UniProtKB"/>
</dbReference>
<dbReference type="GO" id="GO:0005524">
    <property type="term" value="F:ATP binding"/>
    <property type="evidence" value="ECO:0007669"/>
    <property type="project" value="UniProtKB-KW"/>
</dbReference>
<dbReference type="GO" id="GO:0016887">
    <property type="term" value="F:ATP hydrolysis activity"/>
    <property type="evidence" value="ECO:0007669"/>
    <property type="project" value="RHEA"/>
</dbReference>
<dbReference type="GO" id="GO:0030331">
    <property type="term" value="F:nuclear estrogen receptor binding"/>
    <property type="evidence" value="ECO:0000250"/>
    <property type="project" value="UniProtKB"/>
</dbReference>
<dbReference type="GO" id="GO:0003723">
    <property type="term" value="F:RNA binding"/>
    <property type="evidence" value="ECO:0007669"/>
    <property type="project" value="UniProtKB-KW"/>
</dbReference>
<dbReference type="GO" id="GO:0003724">
    <property type="term" value="F:RNA helicase activity"/>
    <property type="evidence" value="ECO:0000250"/>
    <property type="project" value="UniProtKB"/>
</dbReference>
<dbReference type="GO" id="GO:0005102">
    <property type="term" value="F:signaling receptor binding"/>
    <property type="evidence" value="ECO:0000250"/>
    <property type="project" value="UniProtKB"/>
</dbReference>
<dbReference type="GO" id="GO:0003714">
    <property type="term" value="F:transcription corepressor activity"/>
    <property type="evidence" value="ECO:0000250"/>
    <property type="project" value="UniProtKB"/>
</dbReference>
<dbReference type="GO" id="GO:0016070">
    <property type="term" value="P:RNA metabolic process"/>
    <property type="evidence" value="ECO:0000250"/>
    <property type="project" value="UniProtKB"/>
</dbReference>
<dbReference type="GO" id="GO:0006396">
    <property type="term" value="P:RNA processing"/>
    <property type="evidence" value="ECO:0000250"/>
    <property type="project" value="UniProtKB"/>
</dbReference>
<dbReference type="CDD" id="cd17959">
    <property type="entry name" value="DEADc_DDX54"/>
    <property type="match status" value="1"/>
</dbReference>
<dbReference type="CDD" id="cd18787">
    <property type="entry name" value="SF2_C_DEAD"/>
    <property type="match status" value="1"/>
</dbReference>
<dbReference type="FunFam" id="3.40.50.300:FF:000784">
    <property type="entry name" value="ATP-dependent RNA helicase DDX54"/>
    <property type="match status" value="1"/>
</dbReference>
<dbReference type="FunFam" id="3.40.50.300:FF:000865">
    <property type="entry name" value="ATP-dependent RNA helicase DDX54"/>
    <property type="match status" value="1"/>
</dbReference>
<dbReference type="Gene3D" id="3.40.50.300">
    <property type="entry name" value="P-loop containing nucleotide triphosphate hydrolases"/>
    <property type="match status" value="2"/>
</dbReference>
<dbReference type="InterPro" id="IPR012541">
    <property type="entry name" value="DBP10_C"/>
</dbReference>
<dbReference type="InterPro" id="IPR033517">
    <property type="entry name" value="DDX54/DBP10_DEAD-box_helicase"/>
</dbReference>
<dbReference type="InterPro" id="IPR011545">
    <property type="entry name" value="DEAD/DEAH_box_helicase_dom"/>
</dbReference>
<dbReference type="InterPro" id="IPR050079">
    <property type="entry name" value="DEAD_box_RNA_helicase"/>
</dbReference>
<dbReference type="InterPro" id="IPR014001">
    <property type="entry name" value="Helicase_ATP-bd"/>
</dbReference>
<dbReference type="InterPro" id="IPR001650">
    <property type="entry name" value="Helicase_C-like"/>
</dbReference>
<dbReference type="InterPro" id="IPR027417">
    <property type="entry name" value="P-loop_NTPase"/>
</dbReference>
<dbReference type="InterPro" id="IPR000629">
    <property type="entry name" value="RNA-helicase_DEAD-box_CS"/>
</dbReference>
<dbReference type="InterPro" id="IPR014014">
    <property type="entry name" value="RNA_helicase_DEAD_Q_motif"/>
</dbReference>
<dbReference type="PANTHER" id="PTHR47959">
    <property type="entry name" value="ATP-DEPENDENT RNA HELICASE RHLE-RELATED"/>
    <property type="match status" value="1"/>
</dbReference>
<dbReference type="PANTHER" id="PTHR47959:SF8">
    <property type="entry name" value="RNA HELICASE"/>
    <property type="match status" value="1"/>
</dbReference>
<dbReference type="Pfam" id="PF08147">
    <property type="entry name" value="DBP10CT"/>
    <property type="match status" value="1"/>
</dbReference>
<dbReference type="Pfam" id="PF00270">
    <property type="entry name" value="DEAD"/>
    <property type="match status" value="1"/>
</dbReference>
<dbReference type="Pfam" id="PF00271">
    <property type="entry name" value="Helicase_C"/>
    <property type="match status" value="1"/>
</dbReference>
<dbReference type="SMART" id="SM01123">
    <property type="entry name" value="DBP10CT"/>
    <property type="match status" value="1"/>
</dbReference>
<dbReference type="SMART" id="SM00487">
    <property type="entry name" value="DEXDc"/>
    <property type="match status" value="1"/>
</dbReference>
<dbReference type="SMART" id="SM00490">
    <property type="entry name" value="HELICc"/>
    <property type="match status" value="1"/>
</dbReference>
<dbReference type="SUPFAM" id="SSF52540">
    <property type="entry name" value="P-loop containing nucleoside triphosphate hydrolases"/>
    <property type="match status" value="2"/>
</dbReference>
<dbReference type="PROSITE" id="PS00039">
    <property type="entry name" value="DEAD_ATP_HELICASE"/>
    <property type="match status" value="1"/>
</dbReference>
<dbReference type="PROSITE" id="PS51192">
    <property type="entry name" value="HELICASE_ATP_BIND_1"/>
    <property type="match status" value="1"/>
</dbReference>
<dbReference type="PROSITE" id="PS51194">
    <property type="entry name" value="HELICASE_CTER"/>
    <property type="match status" value="1"/>
</dbReference>
<dbReference type="PROSITE" id="PS51195">
    <property type="entry name" value="Q_MOTIF"/>
    <property type="match status" value="1"/>
</dbReference>
<reference key="1">
    <citation type="journal article" date="2002" name="Proc. Natl. Acad. Sci. U.S.A.">
        <title>Positional cloning of the murine flavivirus resistance gene.</title>
        <authorList>
            <person name="Perelygin A.A."/>
            <person name="Scherbik S.V."/>
            <person name="Zhulin I.B."/>
            <person name="Stockman B.M."/>
            <person name="Li Y."/>
            <person name="Brinton M.A."/>
        </authorList>
    </citation>
    <scope>NUCLEOTIDE SEQUENCE [MRNA]</scope>
</reference>
<reference key="2">
    <citation type="journal article" date="2004" name="Genome Res.">
        <title>The status, quality, and expansion of the NIH full-length cDNA project: the Mammalian Gene Collection (MGC).</title>
        <authorList>
            <consortium name="The MGC Project Team"/>
        </authorList>
    </citation>
    <scope>NUCLEOTIDE SEQUENCE [LARGE SCALE MRNA]</scope>
    <source>
        <strain>FVB/N</strain>
        <tissue>Mammary gland</tissue>
    </source>
</reference>
<reference key="3">
    <citation type="journal article" date="2007" name="Proc. Natl. Acad. Sci. U.S.A.">
        <title>Large-scale phosphorylation analysis of mouse liver.</title>
        <authorList>
            <person name="Villen J."/>
            <person name="Beausoleil S.A."/>
            <person name="Gerber S.A."/>
            <person name="Gygi S.P."/>
        </authorList>
    </citation>
    <scope>PHOSPHORYLATION [LARGE SCALE ANALYSIS] AT SER-38 AND SER-40</scope>
    <scope>IDENTIFICATION BY MASS SPECTROMETRY [LARGE SCALE ANALYSIS]</scope>
    <source>
        <tissue>Liver</tissue>
    </source>
</reference>
<reference key="4">
    <citation type="journal article" date="2010" name="Cell">
        <title>A tissue-specific atlas of mouse protein phosphorylation and expression.</title>
        <authorList>
            <person name="Huttlin E.L."/>
            <person name="Jedrychowski M.P."/>
            <person name="Elias J.E."/>
            <person name="Goswami T."/>
            <person name="Rad R."/>
            <person name="Beausoleil S.A."/>
            <person name="Villen J."/>
            <person name="Haas W."/>
            <person name="Sowa M.E."/>
            <person name="Gygi S.P."/>
        </authorList>
    </citation>
    <scope>PHOSPHORYLATION [LARGE SCALE ANALYSIS] AT THR-30; SER-33; SER-38; SER-40; SER-74 AND SER-774</scope>
    <scope>IDENTIFICATION BY MASS SPECTROMETRY [LARGE SCALE ANALYSIS]</scope>
    <source>
        <tissue>Brown adipose tissue</tissue>
        <tissue>Kidney</tissue>
        <tissue>Liver</tissue>
        <tissue>Lung</tissue>
        <tissue>Pancreas</tissue>
        <tissue>Spleen</tissue>
        <tissue>Testis</tissue>
    </source>
</reference>
<name>DDX54_MOUSE</name>
<organism>
    <name type="scientific">Mus musculus</name>
    <name type="common">Mouse</name>
    <dbReference type="NCBI Taxonomy" id="10090"/>
    <lineage>
        <taxon>Eukaryota</taxon>
        <taxon>Metazoa</taxon>
        <taxon>Chordata</taxon>
        <taxon>Craniata</taxon>
        <taxon>Vertebrata</taxon>
        <taxon>Euteleostomi</taxon>
        <taxon>Mammalia</taxon>
        <taxon>Eutheria</taxon>
        <taxon>Euarchontoglires</taxon>
        <taxon>Glires</taxon>
        <taxon>Rodentia</taxon>
        <taxon>Myomorpha</taxon>
        <taxon>Muroidea</taxon>
        <taxon>Muridae</taxon>
        <taxon>Murinae</taxon>
        <taxon>Mus</taxon>
        <taxon>Mus</taxon>
    </lineage>
</organism>
<accession>Q8K4L0</accession>
<gene>
    <name type="primary">Ddx54</name>
</gene>
<proteinExistence type="evidence at protein level"/>
<sequence length="874" mass="97748">MAAGRRVGPGPPSRPTMAPWKKKRLRKRRTGASQGRDSDSDDGEFEIQAEDDARARKLGPGRALPSFPTSECVSDVEPDTREMVRAQNKKKKKSGGFQSMGLSYPVFKGIMKKGYKVPTPIQRKTIPVILDGKDVVAMARTGSGKTACFLLPMFERLKARSAQTGARALILSPTRELALQTMKFTKELGKFTGLKTALILGGDKMEDQFAALHENPDIIIATPGRLVHVAVEMNLKLQSVEYVVFDEADRLFEMGFAEQLQEIIGRLPGGHQTVLFSATLPKLLVEFARAGLTEPVLIRLDVDSKLNEQLKTSFLLVREDTKAAVLLYLLQNVVRPQDQTVVFVATKHHAEYLTELLMGQGVSCAHIYSALDQTARKINLAKFTHNKCSTLIVTDLAARGLDIPLLDNVINYSFPAKGKLFLHRVGRVARAGRSGTAYSLVAPDEVPYLLDLHLFLGRSVTLARPCEEPSVADAVGRDGVLGRVPQSVVDDEDSSLQTAMGASLDLQGLHRVANNAQQQYVRSRPAPSPESIKRAKELDLAELGLHPLFSSCFEEGELQRLRLVDSIKNYRTRTTIFEINASSKDPSSQMMRAKRQRDRKAVASFQQRRQERQEGPADPAPQRELPQEEEEEMVETVEGVFTEVVGQKRPRPGPSQGAKRRRMETRQRDQEFYVPYRPKDFDSERGLSVSGAGGAFEQQVAGAVLDLMGDEAQNMSRGQQQLKWDRKKKRFVGQSGQEDKKKIKTESGRFISSSYKRDLYQKWKQKQKIDDRDSEEEGPSNQRGPGPRRGGKRGRSQGTSQPRASSVPAGRMRSELKTKEQILKQRRQAQKQRFLQRGGLKQLSARNRRRAQELRQGAFGRGAPSRKGKMRKRM</sequence>
<evidence type="ECO:0000250" key="1"/>
<evidence type="ECO:0000250" key="2">
    <source>
        <dbReference type="UniProtKB" id="Q8TDD1"/>
    </source>
</evidence>
<evidence type="ECO:0000255" key="3">
    <source>
        <dbReference type="PROSITE-ProRule" id="PRU00541"/>
    </source>
</evidence>
<evidence type="ECO:0000255" key="4">
    <source>
        <dbReference type="PROSITE-ProRule" id="PRU00542"/>
    </source>
</evidence>
<evidence type="ECO:0000256" key="5">
    <source>
        <dbReference type="SAM" id="MobiDB-lite"/>
    </source>
</evidence>
<evidence type="ECO:0000305" key="6"/>
<evidence type="ECO:0007744" key="7">
    <source>
    </source>
</evidence>
<evidence type="ECO:0007744" key="8">
    <source>
    </source>
</evidence>
<feature type="chain" id="PRO_0000055057" description="ATP-dependent RNA helicase DDX54">
    <location>
        <begin position="1"/>
        <end position="874"/>
    </location>
</feature>
<feature type="domain" description="Helicase ATP-binding" evidence="3">
    <location>
        <begin position="126"/>
        <end position="298"/>
    </location>
</feature>
<feature type="domain" description="Helicase C-terminal" evidence="4">
    <location>
        <begin position="328"/>
        <end position="472"/>
    </location>
</feature>
<feature type="region of interest" description="Disordered" evidence="5">
    <location>
        <begin position="1"/>
        <end position="76"/>
    </location>
</feature>
<feature type="region of interest" description="Disordered" evidence="5">
    <location>
        <begin position="581"/>
        <end position="687"/>
    </location>
</feature>
<feature type="region of interest" description="Disordered" evidence="5">
    <location>
        <begin position="712"/>
        <end position="874"/>
    </location>
</feature>
<feature type="short sequence motif" description="Q motif">
    <location>
        <begin position="95"/>
        <end position="123"/>
    </location>
</feature>
<feature type="short sequence motif" description="DEAD box">
    <location>
        <begin position="246"/>
        <end position="249"/>
    </location>
</feature>
<feature type="compositionally biased region" description="Basic residues" evidence="5">
    <location>
        <begin position="20"/>
        <end position="30"/>
    </location>
</feature>
<feature type="compositionally biased region" description="Acidic residues" evidence="5">
    <location>
        <begin position="39"/>
        <end position="50"/>
    </location>
</feature>
<feature type="compositionally biased region" description="Polar residues" evidence="5">
    <location>
        <begin position="581"/>
        <end position="590"/>
    </location>
</feature>
<feature type="compositionally biased region" description="Low complexity" evidence="5">
    <location>
        <begin position="636"/>
        <end position="645"/>
    </location>
</feature>
<feature type="compositionally biased region" description="Basic and acidic residues" evidence="5">
    <location>
        <begin position="664"/>
        <end position="685"/>
    </location>
</feature>
<feature type="compositionally biased region" description="Polar residues" evidence="5">
    <location>
        <begin position="713"/>
        <end position="722"/>
    </location>
</feature>
<feature type="compositionally biased region" description="Basic and acidic residues" evidence="5">
    <location>
        <begin position="737"/>
        <end position="747"/>
    </location>
</feature>
<feature type="compositionally biased region" description="Basic and acidic residues" evidence="5">
    <location>
        <begin position="755"/>
        <end position="771"/>
    </location>
</feature>
<feature type="compositionally biased region" description="Basic and acidic residues" evidence="5">
    <location>
        <begin position="812"/>
        <end position="823"/>
    </location>
</feature>
<feature type="compositionally biased region" description="Basic residues" evidence="5">
    <location>
        <begin position="864"/>
        <end position="874"/>
    </location>
</feature>
<feature type="binding site" evidence="3">
    <location>
        <begin position="139"/>
        <end position="146"/>
    </location>
    <ligand>
        <name>ATP</name>
        <dbReference type="ChEBI" id="CHEBI:30616"/>
    </ligand>
</feature>
<feature type="modified residue" description="Phosphothreonine" evidence="8">
    <location>
        <position position="30"/>
    </location>
</feature>
<feature type="modified residue" description="Phosphoserine" evidence="8">
    <location>
        <position position="33"/>
    </location>
</feature>
<feature type="modified residue" description="Phosphoserine" evidence="7 8">
    <location>
        <position position="38"/>
    </location>
</feature>
<feature type="modified residue" description="Phosphoserine" evidence="7 8">
    <location>
        <position position="40"/>
    </location>
</feature>
<feature type="modified residue" description="Phosphoserine" evidence="8">
    <location>
        <position position="74"/>
    </location>
</feature>
<feature type="modified residue" description="Phosphoserine" evidence="2">
    <location>
        <position position="688"/>
    </location>
</feature>
<feature type="modified residue" description="Phosphoserine" evidence="2">
    <location>
        <position position="690"/>
    </location>
</feature>
<feature type="modified residue" description="Phosphoserine" evidence="8">
    <location>
        <position position="774"/>
    </location>
</feature>
<feature type="modified residue" description="Phosphoserine" evidence="2">
    <location>
        <position position="780"/>
    </location>
</feature>
<comment type="function">
    <text evidence="1">Has RNA-dependent ATPase activity. Represses the transcriptional activity of nuclear receptors (By similarity).</text>
</comment>
<comment type="catalytic activity">
    <reaction>
        <text>ATP + H2O = ADP + phosphate + H(+)</text>
        <dbReference type="Rhea" id="RHEA:13065"/>
        <dbReference type="ChEBI" id="CHEBI:15377"/>
        <dbReference type="ChEBI" id="CHEBI:15378"/>
        <dbReference type="ChEBI" id="CHEBI:30616"/>
        <dbReference type="ChEBI" id="CHEBI:43474"/>
        <dbReference type="ChEBI" id="CHEBI:456216"/>
        <dbReference type="EC" id="3.6.4.13"/>
    </reaction>
</comment>
<comment type="subunit">
    <text evidence="1">Interacts in a hormone-dependent manner with nuclear receptors.</text>
</comment>
<comment type="subcellular location">
    <subcellularLocation>
        <location evidence="1">Nucleus</location>
        <location evidence="1">Nucleolus</location>
    </subcellularLocation>
</comment>
<comment type="similarity">
    <text evidence="6">Belongs to the DEAD box helicase family. DDX54/DBP10 subfamily.</text>
</comment>